<name>FRSA_KLEP3</name>
<protein>
    <recommendedName>
        <fullName evidence="1">Esterase FrsA</fullName>
        <ecNumber evidence="1">3.1.1.1</ecNumber>
    </recommendedName>
</protein>
<keyword id="KW-0378">Hydrolase</keyword>
<keyword id="KW-0719">Serine esterase</keyword>
<comment type="function">
    <text evidence="1">Catalyzes the hydrolysis of esters.</text>
</comment>
<comment type="catalytic activity">
    <reaction evidence="1">
        <text>a carboxylic ester + H2O = an alcohol + a carboxylate + H(+)</text>
        <dbReference type="Rhea" id="RHEA:21164"/>
        <dbReference type="ChEBI" id="CHEBI:15377"/>
        <dbReference type="ChEBI" id="CHEBI:15378"/>
        <dbReference type="ChEBI" id="CHEBI:29067"/>
        <dbReference type="ChEBI" id="CHEBI:30879"/>
        <dbReference type="ChEBI" id="CHEBI:33308"/>
        <dbReference type="EC" id="3.1.1.1"/>
    </reaction>
</comment>
<comment type="similarity">
    <text evidence="1">Belongs to the FrsA family.</text>
</comment>
<dbReference type="EC" id="3.1.1.1" evidence="1"/>
<dbReference type="EMBL" id="CP000964">
    <property type="protein sequence ID" value="ACI11485.1"/>
    <property type="molecule type" value="Genomic_DNA"/>
</dbReference>
<dbReference type="SMR" id="B5Y1D9"/>
<dbReference type="ESTHER" id="klep7-y243">
    <property type="family name" value="Duf_1100-R"/>
</dbReference>
<dbReference type="KEGG" id="kpe:KPK_4481"/>
<dbReference type="HOGENOM" id="CLU_036819_0_0_6"/>
<dbReference type="BioCyc" id="KPNE507522:GI0B-4462-MONOMER"/>
<dbReference type="Proteomes" id="UP000001734">
    <property type="component" value="Chromosome"/>
</dbReference>
<dbReference type="GO" id="GO:0106435">
    <property type="term" value="F:carboxylesterase activity"/>
    <property type="evidence" value="ECO:0007669"/>
    <property type="project" value="UniProtKB-EC"/>
</dbReference>
<dbReference type="FunFam" id="3.40.50.1820:FF:000022">
    <property type="entry name" value="Esterase FrsA"/>
    <property type="match status" value="1"/>
</dbReference>
<dbReference type="Gene3D" id="3.40.50.1820">
    <property type="entry name" value="alpha/beta hydrolase"/>
    <property type="match status" value="1"/>
</dbReference>
<dbReference type="HAMAP" id="MF_01063">
    <property type="entry name" value="FrsA"/>
    <property type="match status" value="1"/>
</dbReference>
<dbReference type="InterPro" id="IPR029058">
    <property type="entry name" value="AB_hydrolase_fold"/>
</dbReference>
<dbReference type="InterPro" id="IPR043423">
    <property type="entry name" value="FrsA"/>
</dbReference>
<dbReference type="InterPro" id="IPR010520">
    <property type="entry name" value="FrsA-like"/>
</dbReference>
<dbReference type="InterPro" id="IPR050261">
    <property type="entry name" value="FrsA_esterase"/>
</dbReference>
<dbReference type="NCBIfam" id="NF003460">
    <property type="entry name" value="PRK05077.1"/>
    <property type="match status" value="1"/>
</dbReference>
<dbReference type="PANTHER" id="PTHR22946">
    <property type="entry name" value="DIENELACTONE HYDROLASE DOMAIN-CONTAINING PROTEIN-RELATED"/>
    <property type="match status" value="1"/>
</dbReference>
<dbReference type="PANTHER" id="PTHR22946:SF4">
    <property type="entry name" value="ESTERASE FRSA"/>
    <property type="match status" value="1"/>
</dbReference>
<dbReference type="Pfam" id="PF06500">
    <property type="entry name" value="FrsA-like"/>
    <property type="match status" value="1"/>
</dbReference>
<dbReference type="SUPFAM" id="SSF53474">
    <property type="entry name" value="alpha/beta-Hydrolases"/>
    <property type="match status" value="1"/>
</dbReference>
<gene>
    <name evidence="1" type="primary">frsA</name>
    <name type="ordered locus">KPK_4481</name>
</gene>
<sequence>MSQANLSETLFKPRFKHPETSTLVRRFSAGKPQAMQSALSGNHVDHWYRLINRLMWIWRGVTPQEILDVQARIVMSEAERTDPELFDTVIGYRGGNWIFEWAKEAMQWQQKAGQEADPLLSGRHWLHASNLYSIAAYPHIKGDELAEQAQALANRAYEEAAQRLPGSLRELEFTIPGGSPITGFLHMPKGDGPFPTVLMCGGLDSLQTDYYNLYENYFSPLGIAMLTIDMPSIGFSSKWTLNQDTSLLHQHALRHLENVPWVDHTRVAAFGFRFGANIAVRLGYLEPQRLKAVACLGPVVHGLLVDPLHQGRVPEMYLDVLASRLGMHDASDEALRVELNRYSLKTQGLLGRRCPTPMLSGFWKDDPFSPEEESRLITSSSADGKLLEIPFNPVYRNFDHALRQIARWINHRFG</sequence>
<accession>B5Y1D9</accession>
<feature type="chain" id="PRO_1000136519" description="Esterase FrsA">
    <location>
        <begin position="1"/>
        <end position="414"/>
    </location>
</feature>
<evidence type="ECO:0000255" key="1">
    <source>
        <dbReference type="HAMAP-Rule" id="MF_01063"/>
    </source>
</evidence>
<organism>
    <name type="scientific">Klebsiella pneumoniae (strain 342)</name>
    <dbReference type="NCBI Taxonomy" id="507522"/>
    <lineage>
        <taxon>Bacteria</taxon>
        <taxon>Pseudomonadati</taxon>
        <taxon>Pseudomonadota</taxon>
        <taxon>Gammaproteobacteria</taxon>
        <taxon>Enterobacterales</taxon>
        <taxon>Enterobacteriaceae</taxon>
        <taxon>Klebsiella/Raoultella group</taxon>
        <taxon>Klebsiella</taxon>
        <taxon>Klebsiella pneumoniae complex</taxon>
    </lineage>
</organism>
<reference key="1">
    <citation type="journal article" date="2008" name="PLoS Genet.">
        <title>Complete genome sequence of the N2-fixing broad host range endophyte Klebsiella pneumoniae 342 and virulence predictions verified in mice.</title>
        <authorList>
            <person name="Fouts D.E."/>
            <person name="Tyler H.L."/>
            <person name="DeBoy R.T."/>
            <person name="Daugherty S."/>
            <person name="Ren Q."/>
            <person name="Badger J.H."/>
            <person name="Durkin A.S."/>
            <person name="Huot H."/>
            <person name="Shrivastava S."/>
            <person name="Kothari S."/>
            <person name="Dodson R.J."/>
            <person name="Mohamoud Y."/>
            <person name="Khouri H."/>
            <person name="Roesch L.F.W."/>
            <person name="Krogfelt K.A."/>
            <person name="Struve C."/>
            <person name="Triplett E.W."/>
            <person name="Methe B.A."/>
        </authorList>
    </citation>
    <scope>NUCLEOTIDE SEQUENCE [LARGE SCALE GENOMIC DNA]</scope>
    <source>
        <strain>342</strain>
    </source>
</reference>
<proteinExistence type="inferred from homology"/>